<name>COX2_CERSI</name>
<accession>O03851</accession>
<sequence length="227" mass="26007">MAYPFQLGFQDATSPIMEELLHFHDHTLMIVFLISSLVLYIISLMLTTKLTHTSTMDAQEVETIWTILPAIILILIALPSLRILYMMDEINNPSLTVKTMGHQWYWSYEYTDYEDLTFDSYMIPTSDLKPGELRLLEVDNRVVLPMEMTIRMLISSEDVLHSWAVPSLGLKTDAIPGRLNQTTLVSTRPGLYYGQCSEICGSNHSFMPIVLELVPLKHFEKWSASML</sequence>
<protein>
    <recommendedName>
        <fullName>Cytochrome c oxidase subunit 2</fullName>
        <ecNumber>7.1.1.9</ecNumber>
    </recommendedName>
    <alternativeName>
        <fullName>Cytochrome c oxidase polypeptide II</fullName>
    </alternativeName>
</protein>
<gene>
    <name type="primary">MT-CO2</name>
    <name type="synonym">COII</name>
    <name type="synonym">COX2</name>
    <name type="synonym">COXII</name>
    <name type="synonym">MTCO2</name>
</gene>
<organism>
    <name type="scientific">Ceratotherium simum</name>
    <name type="common">White rhinoceros</name>
    <name type="synonym">Square-lipped rhinoceros</name>
    <dbReference type="NCBI Taxonomy" id="9807"/>
    <lineage>
        <taxon>Eukaryota</taxon>
        <taxon>Metazoa</taxon>
        <taxon>Chordata</taxon>
        <taxon>Craniata</taxon>
        <taxon>Vertebrata</taxon>
        <taxon>Euteleostomi</taxon>
        <taxon>Mammalia</taxon>
        <taxon>Eutheria</taxon>
        <taxon>Laurasiatheria</taxon>
        <taxon>Perissodactyla</taxon>
        <taxon>Rhinocerotidae</taxon>
        <taxon>Ceratotherium</taxon>
    </lineage>
</organism>
<feature type="chain" id="PRO_0000183543" description="Cytochrome c oxidase subunit 2">
    <location>
        <begin position="1"/>
        <end position="227"/>
    </location>
</feature>
<feature type="topological domain" description="Mitochondrial intermembrane" evidence="3">
    <location>
        <begin position="1"/>
        <end position="14"/>
    </location>
</feature>
<feature type="transmembrane region" description="Helical; Name=I" evidence="3">
    <location>
        <begin position="15"/>
        <end position="45"/>
    </location>
</feature>
<feature type="topological domain" description="Mitochondrial matrix" evidence="3">
    <location>
        <begin position="46"/>
        <end position="59"/>
    </location>
</feature>
<feature type="transmembrane region" description="Helical; Name=II" evidence="3">
    <location>
        <begin position="60"/>
        <end position="87"/>
    </location>
</feature>
<feature type="topological domain" description="Mitochondrial intermembrane" evidence="3">
    <location>
        <begin position="88"/>
        <end position="227"/>
    </location>
</feature>
<feature type="binding site" evidence="3">
    <location>
        <position position="161"/>
    </location>
    <ligand>
        <name>Cu cation</name>
        <dbReference type="ChEBI" id="CHEBI:23378"/>
        <label>A1</label>
    </ligand>
</feature>
<feature type="binding site" evidence="3">
    <location>
        <position position="196"/>
    </location>
    <ligand>
        <name>Cu cation</name>
        <dbReference type="ChEBI" id="CHEBI:23378"/>
        <label>A1</label>
    </ligand>
</feature>
<feature type="binding site" evidence="3">
    <location>
        <position position="196"/>
    </location>
    <ligand>
        <name>Cu cation</name>
        <dbReference type="ChEBI" id="CHEBI:23378"/>
        <label>A2</label>
    </ligand>
</feature>
<feature type="binding site" evidence="3">
    <location>
        <position position="198"/>
    </location>
    <ligand>
        <name>Cu cation</name>
        <dbReference type="ChEBI" id="CHEBI:23378"/>
        <label>A2</label>
    </ligand>
</feature>
<feature type="binding site" evidence="3">
    <location>
        <position position="198"/>
    </location>
    <ligand>
        <name>Mg(2+)</name>
        <dbReference type="ChEBI" id="CHEBI:18420"/>
        <note>ligand shared with MT-CO1</note>
    </ligand>
</feature>
<feature type="binding site" evidence="3">
    <location>
        <position position="200"/>
    </location>
    <ligand>
        <name>Cu cation</name>
        <dbReference type="ChEBI" id="CHEBI:23378"/>
        <label>A1</label>
    </ligand>
</feature>
<feature type="binding site" evidence="3">
    <location>
        <position position="200"/>
    </location>
    <ligand>
        <name>Cu cation</name>
        <dbReference type="ChEBI" id="CHEBI:23378"/>
        <label>A2</label>
    </ligand>
</feature>
<feature type="binding site" evidence="3">
    <location>
        <position position="204"/>
    </location>
    <ligand>
        <name>Cu cation</name>
        <dbReference type="ChEBI" id="CHEBI:23378"/>
        <label>A2</label>
    </ligand>
</feature>
<feature type="binding site" evidence="3">
    <location>
        <position position="207"/>
    </location>
    <ligand>
        <name>Cu cation</name>
        <dbReference type="ChEBI" id="CHEBI:23378"/>
        <label>A1</label>
    </ligand>
</feature>
<comment type="function">
    <text evidence="2">Component of the cytochrome c oxidase, the last enzyme in the mitochondrial electron transport chain which drives oxidative phosphorylation. The respiratory chain contains 3 multisubunit complexes succinate dehydrogenase (complex II, CII), ubiquinol-cytochrome c oxidoreductase (cytochrome b-c1 complex, complex III, CIII) and cytochrome c oxidase (complex IV, CIV), that cooperate to transfer electrons derived from NADH and succinate to molecular oxygen, creating an electrochemical gradient over the inner membrane that drives transmembrane transport and the ATP synthase. Cytochrome c oxidase is the component of the respiratory chain that catalyzes the reduction of oxygen to water. Electrons originating from reduced cytochrome c in the intermembrane space (IMS) are transferred via the dinuclear copper A center (CU(A)) of subunit 2 and heme A of subunit 1 to the active site in subunit 1, a binuclear center (BNC) formed by heme A3 and copper B (CU(B)). The BNC reduces molecular oxygen to 2 water molecules using 4 electrons from cytochrome c in the IMS and 4 protons from the mitochondrial matrix.</text>
</comment>
<comment type="catalytic activity">
    <reaction evidence="2">
        <text>4 Fe(II)-[cytochrome c] + O2 + 8 H(+)(in) = 4 Fe(III)-[cytochrome c] + 2 H2O + 4 H(+)(out)</text>
        <dbReference type="Rhea" id="RHEA:11436"/>
        <dbReference type="Rhea" id="RHEA-COMP:10350"/>
        <dbReference type="Rhea" id="RHEA-COMP:14399"/>
        <dbReference type="ChEBI" id="CHEBI:15377"/>
        <dbReference type="ChEBI" id="CHEBI:15378"/>
        <dbReference type="ChEBI" id="CHEBI:15379"/>
        <dbReference type="ChEBI" id="CHEBI:29033"/>
        <dbReference type="ChEBI" id="CHEBI:29034"/>
        <dbReference type="EC" id="7.1.1.9"/>
    </reaction>
    <physiologicalReaction direction="left-to-right" evidence="2">
        <dbReference type="Rhea" id="RHEA:11437"/>
    </physiologicalReaction>
</comment>
<comment type="cofactor">
    <cofactor evidence="3">
        <name>Cu cation</name>
        <dbReference type="ChEBI" id="CHEBI:23378"/>
    </cofactor>
    <text evidence="3">Binds a dinuclear copper A center per subunit.</text>
</comment>
<comment type="subunit">
    <text evidence="1 3">Component of the cytochrome c oxidase (complex IV, CIV), a multisubunit enzyme composed of 14 subunits. The complex is composed of a catalytic core of 3 subunits MT-CO1, MT-CO2 and MT-CO3, encoded in the mitochondrial DNA, and 11 supernumerary subunits COX4I, COX5A, COX5B, COX6A, COX6B, COX6C, COX7A, COX7B, COX7C, COX8 and NDUFA4, which are encoded in the nuclear genome. The complex exists as a monomer or a dimer and forms supercomplexes (SCs) in the inner mitochondrial membrane with NADH-ubiquinone oxidoreductase (complex I, CI) and ubiquinol-cytochrome c oxidoreductase (cytochrome b-c1 complex, complex III, CIII), resulting in different assemblies (supercomplex SCI(1)III(2)IV(1) and megacomplex MCI(2)III(2)IV(2)) (By similarity). Found in a complex with TMEM177, COA6, COX18, COX20, SCO1 and SCO2. Interacts with TMEM177 in a COX20-dependent manner. Interacts with COX20. Interacts with COX16 (By similarity).</text>
</comment>
<comment type="subcellular location">
    <subcellularLocation>
        <location evidence="3">Mitochondrion inner membrane</location>
        <topology evidence="3">Multi-pass membrane protein</topology>
    </subcellularLocation>
</comment>
<comment type="similarity">
    <text evidence="4">Belongs to the cytochrome c oxidase subunit 2 family.</text>
</comment>
<geneLocation type="mitochondrion"/>
<dbReference type="EC" id="7.1.1.9"/>
<dbReference type="EMBL" id="Y07726">
    <property type="protein sequence ID" value="CAA69009.1"/>
    <property type="molecule type" value="Genomic_DNA"/>
</dbReference>
<dbReference type="RefSeq" id="NP_007436.1">
    <property type="nucleotide sequence ID" value="NC_001808.1"/>
</dbReference>
<dbReference type="SMR" id="O03851"/>
<dbReference type="GeneID" id="808098"/>
<dbReference type="CTD" id="4513"/>
<dbReference type="OMA" id="WSYEYTD"/>
<dbReference type="GO" id="GO:0005743">
    <property type="term" value="C:mitochondrial inner membrane"/>
    <property type="evidence" value="ECO:0007669"/>
    <property type="project" value="UniProtKB-SubCell"/>
</dbReference>
<dbReference type="GO" id="GO:0045277">
    <property type="term" value="C:respiratory chain complex IV"/>
    <property type="evidence" value="ECO:0000250"/>
    <property type="project" value="UniProtKB"/>
</dbReference>
<dbReference type="GO" id="GO:0005507">
    <property type="term" value="F:copper ion binding"/>
    <property type="evidence" value="ECO:0007669"/>
    <property type="project" value="InterPro"/>
</dbReference>
<dbReference type="GO" id="GO:0004129">
    <property type="term" value="F:cytochrome-c oxidase activity"/>
    <property type="evidence" value="ECO:0007669"/>
    <property type="project" value="UniProtKB-EC"/>
</dbReference>
<dbReference type="GO" id="GO:0042773">
    <property type="term" value="P:ATP synthesis coupled electron transport"/>
    <property type="evidence" value="ECO:0007669"/>
    <property type="project" value="TreeGrafter"/>
</dbReference>
<dbReference type="CDD" id="cd13912">
    <property type="entry name" value="CcO_II_C"/>
    <property type="match status" value="1"/>
</dbReference>
<dbReference type="FunFam" id="1.10.287.90:FF:000001">
    <property type="entry name" value="Cytochrome c oxidase subunit 2"/>
    <property type="match status" value="1"/>
</dbReference>
<dbReference type="FunFam" id="2.60.40.420:FF:000001">
    <property type="entry name" value="Cytochrome c oxidase subunit 2"/>
    <property type="match status" value="1"/>
</dbReference>
<dbReference type="Gene3D" id="1.10.287.90">
    <property type="match status" value="1"/>
</dbReference>
<dbReference type="Gene3D" id="2.60.40.420">
    <property type="entry name" value="Cupredoxins - blue copper proteins"/>
    <property type="match status" value="1"/>
</dbReference>
<dbReference type="InterPro" id="IPR045187">
    <property type="entry name" value="CcO_II"/>
</dbReference>
<dbReference type="InterPro" id="IPR002429">
    <property type="entry name" value="CcO_II-like_C"/>
</dbReference>
<dbReference type="InterPro" id="IPR034210">
    <property type="entry name" value="CcO_II_C"/>
</dbReference>
<dbReference type="InterPro" id="IPR001505">
    <property type="entry name" value="Copper_CuA"/>
</dbReference>
<dbReference type="InterPro" id="IPR008972">
    <property type="entry name" value="Cupredoxin"/>
</dbReference>
<dbReference type="InterPro" id="IPR014222">
    <property type="entry name" value="Cyt_c_oxidase_su2"/>
</dbReference>
<dbReference type="InterPro" id="IPR011759">
    <property type="entry name" value="Cyt_c_oxidase_su2_TM_dom"/>
</dbReference>
<dbReference type="InterPro" id="IPR036257">
    <property type="entry name" value="Cyt_c_oxidase_su2_TM_sf"/>
</dbReference>
<dbReference type="NCBIfam" id="TIGR02866">
    <property type="entry name" value="CoxB"/>
    <property type="match status" value="1"/>
</dbReference>
<dbReference type="PANTHER" id="PTHR22888:SF9">
    <property type="entry name" value="CYTOCHROME C OXIDASE SUBUNIT 2"/>
    <property type="match status" value="1"/>
</dbReference>
<dbReference type="PANTHER" id="PTHR22888">
    <property type="entry name" value="CYTOCHROME C OXIDASE, SUBUNIT II"/>
    <property type="match status" value="1"/>
</dbReference>
<dbReference type="Pfam" id="PF00116">
    <property type="entry name" value="COX2"/>
    <property type="match status" value="1"/>
</dbReference>
<dbReference type="Pfam" id="PF02790">
    <property type="entry name" value="COX2_TM"/>
    <property type="match status" value="1"/>
</dbReference>
<dbReference type="PRINTS" id="PR01166">
    <property type="entry name" value="CYCOXIDASEII"/>
</dbReference>
<dbReference type="SUPFAM" id="SSF49503">
    <property type="entry name" value="Cupredoxins"/>
    <property type="match status" value="1"/>
</dbReference>
<dbReference type="SUPFAM" id="SSF81464">
    <property type="entry name" value="Cytochrome c oxidase subunit II-like, transmembrane region"/>
    <property type="match status" value="1"/>
</dbReference>
<dbReference type="PROSITE" id="PS00078">
    <property type="entry name" value="COX2"/>
    <property type="match status" value="1"/>
</dbReference>
<dbReference type="PROSITE" id="PS50857">
    <property type="entry name" value="COX2_CUA"/>
    <property type="match status" value="1"/>
</dbReference>
<dbReference type="PROSITE" id="PS50999">
    <property type="entry name" value="COX2_TM"/>
    <property type="match status" value="1"/>
</dbReference>
<reference key="1">
    <citation type="journal article" date="1997" name="Mol. Phylogenet. Evol.">
        <title>The complete mitochondrial DNA sequence of the white rhinoceros, Ceratotherium simum, and comparison with the mtDNA sequence of the Indian rhinoceros, Rhinoceros unicornis.</title>
        <authorList>
            <person name="Xu X."/>
            <person name="Arnason U."/>
        </authorList>
    </citation>
    <scope>NUCLEOTIDE SEQUENCE [GENOMIC DNA]</scope>
</reference>
<evidence type="ECO:0000250" key="1">
    <source>
        <dbReference type="UniProtKB" id="P00403"/>
    </source>
</evidence>
<evidence type="ECO:0000250" key="2">
    <source>
        <dbReference type="UniProtKB" id="P00410"/>
    </source>
</evidence>
<evidence type="ECO:0000250" key="3">
    <source>
        <dbReference type="UniProtKB" id="P68530"/>
    </source>
</evidence>
<evidence type="ECO:0000305" key="4"/>
<keyword id="KW-0186">Copper</keyword>
<keyword id="KW-0249">Electron transport</keyword>
<keyword id="KW-0460">Magnesium</keyword>
<keyword id="KW-0472">Membrane</keyword>
<keyword id="KW-0479">Metal-binding</keyword>
<keyword id="KW-0496">Mitochondrion</keyword>
<keyword id="KW-0999">Mitochondrion inner membrane</keyword>
<keyword id="KW-0679">Respiratory chain</keyword>
<keyword id="KW-1278">Translocase</keyword>
<keyword id="KW-0812">Transmembrane</keyword>
<keyword id="KW-1133">Transmembrane helix</keyword>
<keyword id="KW-0813">Transport</keyword>
<proteinExistence type="inferred from homology"/>